<keyword id="KW-0131">Cell cycle</keyword>
<keyword id="KW-0132">Cell division</keyword>
<keyword id="KW-0963">Cytoplasm</keyword>
<keyword id="KW-0597">Phosphoprotein</keyword>
<keyword id="KW-1185">Reference proteome</keyword>
<keyword id="KW-0677">Repeat</keyword>
<keyword id="KW-0717">Septation</keyword>
<organism>
    <name type="scientific">Schizosaccharomyces pombe (strain 972 / ATCC 24843)</name>
    <name type="common">Fission yeast</name>
    <dbReference type="NCBI Taxonomy" id="284812"/>
    <lineage>
        <taxon>Eukaryota</taxon>
        <taxon>Fungi</taxon>
        <taxon>Dikarya</taxon>
        <taxon>Ascomycota</taxon>
        <taxon>Taphrinomycotina</taxon>
        <taxon>Schizosaccharomycetes</taxon>
        <taxon>Schizosaccharomycetales</taxon>
        <taxon>Schizosaccharomycetaceae</taxon>
        <taxon>Schizosaccharomyces</taxon>
    </lineage>
</organism>
<protein>
    <recommendedName>
        <fullName>Chitin synthase regulatory factor 4</fullName>
    </recommendedName>
    <alternativeName>
        <fullName>Chs four homolog 3</fullName>
    </alternativeName>
</protein>
<gene>
    <name type="primary">chr4</name>
    <name type="synonym">cfh3</name>
    <name type="ORF">SPBC1289.01c</name>
    <name type="ORF">SPBC1539.11c</name>
</gene>
<sequence length="633" mass="70016">MDSASSMRNRSPLGVPEFSYSSQSVNNIRGIKSRNRSSIGHSITDPQVASRINAFYLSNVQSSIPFETDAIGPAYGIGDMIAPEMNDTQSLSASVTNMKKENFYSRPNVSSSSILLTIKRATSSQETKRDRPLPNIRNSAPSATRSHSTPCVAPGYLRTSNEAADVVFPHEEAHFSNHNPKPNNGSPLQKQVVADLPFPLPVSDEEQLDWIRANEDLVHSQDIDEALEWAEYVLRFTQSHLPYLQTYESENLHEINYLESMCENALYKIREFSELENAKAMYFDAYVYETGAFDVESDIQRAWDLYSSSANLGYTRSLYRLGVLLEDQGNLEEAVEYFEKGVSENDSACCWRLSLLILEGMLDGVGEYAHRHASGLELLERSADTADADVPSGLYSHALVNLHEHPGLVDLGSENIRVPIDEATALKSFAKAAFLGHSSAQLRMGAVYEFGKYGCPVVPRYSLFYYSAAAKRGETEADLAVAKWYLNGSDGIPVDEDLAFMHAERASMAGNANAQFLMGYLFDTRGNTEQATYWYNEAAKAGHSEAIERLALLENQIQEPEPENITSSQYPNQDVIKEIPVTASETSPPHAPAVSSTPVTSAPPVSQTKVTKVSVPKKTSKKFLIKHNKCIIS</sequence>
<name>CHR4_SCHPO</name>
<accession>O94614</accession>
<accession>Q7LKX7</accession>
<accession>Q9Y7Z0</accession>
<proteinExistence type="evidence at protein level"/>
<dbReference type="EMBL" id="CU329671">
    <property type="protein sequence ID" value="CAB51343.2"/>
    <property type="molecule type" value="Genomic_DNA"/>
</dbReference>
<dbReference type="PIR" id="T39352">
    <property type="entry name" value="T39352"/>
</dbReference>
<dbReference type="RefSeq" id="NP_596825.2">
    <property type="nucleotide sequence ID" value="NM_001023845.3"/>
</dbReference>
<dbReference type="SMR" id="O94614"/>
<dbReference type="BioGRID" id="276269">
    <property type="interactions" value="6"/>
</dbReference>
<dbReference type="FunCoup" id="O94614">
    <property type="interactions" value="11"/>
</dbReference>
<dbReference type="STRING" id="284812.O94614"/>
<dbReference type="iPTMnet" id="O94614"/>
<dbReference type="PaxDb" id="4896-SPBC1289.01c.1"/>
<dbReference type="EnsemblFungi" id="SPBC1289.01c.1">
    <property type="protein sequence ID" value="SPBC1289.01c.1:pep"/>
    <property type="gene ID" value="SPBC1289.01c"/>
</dbReference>
<dbReference type="GeneID" id="2539716"/>
<dbReference type="KEGG" id="spo:2539716"/>
<dbReference type="PomBase" id="SPBC1289.01c">
    <property type="gene designation" value="chr4"/>
</dbReference>
<dbReference type="VEuPathDB" id="FungiDB:SPBC1289.01c"/>
<dbReference type="eggNOG" id="KOG1550">
    <property type="taxonomic scope" value="Eukaryota"/>
</dbReference>
<dbReference type="HOGENOM" id="CLU_425233_0_0_1"/>
<dbReference type="InParanoid" id="O94614"/>
<dbReference type="OMA" id="IVIPDHK"/>
<dbReference type="PhylomeDB" id="O94614"/>
<dbReference type="PRO" id="PR:O94614"/>
<dbReference type="Proteomes" id="UP000002485">
    <property type="component" value="Chromosome II"/>
</dbReference>
<dbReference type="GO" id="GO:0000148">
    <property type="term" value="C:1,3-beta-D-glucan synthase complex"/>
    <property type="evidence" value="ECO:0000353"/>
    <property type="project" value="PomBase"/>
</dbReference>
<dbReference type="GO" id="GO:0051285">
    <property type="term" value="C:cell cortex of cell tip"/>
    <property type="evidence" value="ECO:0000314"/>
    <property type="project" value="PomBase"/>
</dbReference>
<dbReference type="GO" id="GO:0032153">
    <property type="term" value="C:cell division site"/>
    <property type="evidence" value="ECO:0007005"/>
    <property type="project" value="PomBase"/>
</dbReference>
<dbReference type="GO" id="GO:0051286">
    <property type="term" value="C:cell tip"/>
    <property type="evidence" value="ECO:0000314"/>
    <property type="project" value="PomBase"/>
</dbReference>
<dbReference type="GO" id="GO:0005829">
    <property type="term" value="C:cytosol"/>
    <property type="evidence" value="ECO:0007005"/>
    <property type="project" value="PomBase"/>
</dbReference>
<dbReference type="GO" id="GO:0000935">
    <property type="term" value="C:division septum"/>
    <property type="evidence" value="ECO:0000314"/>
    <property type="project" value="PomBase"/>
</dbReference>
<dbReference type="GO" id="GO:0005634">
    <property type="term" value="C:nucleus"/>
    <property type="evidence" value="ECO:0007005"/>
    <property type="project" value="PomBase"/>
</dbReference>
<dbReference type="GO" id="GO:0070880">
    <property type="term" value="P:fungal-type cell wall beta-glucan biosynthetic process"/>
    <property type="evidence" value="ECO:0000315"/>
    <property type="project" value="PomBase"/>
</dbReference>
<dbReference type="GO" id="GO:0031505">
    <property type="term" value="P:fungal-type cell wall organization"/>
    <property type="evidence" value="ECO:0000318"/>
    <property type="project" value="GO_Central"/>
</dbReference>
<dbReference type="GO" id="GO:0140278">
    <property type="term" value="P:mitotic division septum assembly"/>
    <property type="evidence" value="ECO:0000315"/>
    <property type="project" value="PomBase"/>
</dbReference>
<dbReference type="Gene3D" id="1.25.40.10">
    <property type="entry name" value="Tetratricopeptide repeat domain"/>
    <property type="match status" value="2"/>
</dbReference>
<dbReference type="InterPro" id="IPR051726">
    <property type="entry name" value="Chitin_Synth_Reg"/>
</dbReference>
<dbReference type="InterPro" id="IPR006597">
    <property type="entry name" value="Sel1-like"/>
</dbReference>
<dbReference type="InterPro" id="IPR011990">
    <property type="entry name" value="TPR-like_helical_dom_sf"/>
</dbReference>
<dbReference type="InterPro" id="IPR019734">
    <property type="entry name" value="TPR_rpt"/>
</dbReference>
<dbReference type="PANTHER" id="PTHR46430:SF2">
    <property type="entry name" value="CHITIN SYNTHASE REGULATORY FACTOR 4"/>
    <property type="match status" value="1"/>
</dbReference>
<dbReference type="PANTHER" id="PTHR46430">
    <property type="entry name" value="PROTEIN SKT5-RELATED"/>
    <property type="match status" value="1"/>
</dbReference>
<dbReference type="Pfam" id="PF08238">
    <property type="entry name" value="Sel1"/>
    <property type="match status" value="4"/>
</dbReference>
<dbReference type="Pfam" id="PF13181">
    <property type="entry name" value="TPR_8"/>
    <property type="match status" value="1"/>
</dbReference>
<dbReference type="SMART" id="SM00671">
    <property type="entry name" value="SEL1"/>
    <property type="match status" value="5"/>
</dbReference>
<dbReference type="SMART" id="SM00028">
    <property type="entry name" value="TPR"/>
    <property type="match status" value="2"/>
</dbReference>
<dbReference type="SUPFAM" id="SSF81901">
    <property type="entry name" value="HCP-like"/>
    <property type="match status" value="2"/>
</dbReference>
<dbReference type="PROSITE" id="PS50005">
    <property type="entry name" value="TPR"/>
    <property type="match status" value="2"/>
</dbReference>
<dbReference type="PROSITE" id="PS50293">
    <property type="entry name" value="TPR_REGION"/>
    <property type="match status" value="2"/>
</dbReference>
<reference key="1">
    <citation type="journal article" date="2002" name="Nature">
        <title>The genome sequence of Schizosaccharomyces pombe.</title>
        <authorList>
            <person name="Wood V."/>
            <person name="Gwilliam R."/>
            <person name="Rajandream M.A."/>
            <person name="Lyne M.H."/>
            <person name="Lyne R."/>
            <person name="Stewart A."/>
            <person name="Sgouros J.G."/>
            <person name="Peat N."/>
            <person name="Hayles J."/>
            <person name="Baker S.G."/>
            <person name="Basham D."/>
            <person name="Bowman S."/>
            <person name="Brooks K."/>
            <person name="Brown D."/>
            <person name="Brown S."/>
            <person name="Chillingworth T."/>
            <person name="Churcher C.M."/>
            <person name="Collins M."/>
            <person name="Connor R."/>
            <person name="Cronin A."/>
            <person name="Davis P."/>
            <person name="Feltwell T."/>
            <person name="Fraser A."/>
            <person name="Gentles S."/>
            <person name="Goble A."/>
            <person name="Hamlin N."/>
            <person name="Harris D.E."/>
            <person name="Hidalgo J."/>
            <person name="Hodgson G."/>
            <person name="Holroyd S."/>
            <person name="Hornsby T."/>
            <person name="Howarth S."/>
            <person name="Huckle E.J."/>
            <person name="Hunt S."/>
            <person name="Jagels K."/>
            <person name="James K.D."/>
            <person name="Jones L."/>
            <person name="Jones M."/>
            <person name="Leather S."/>
            <person name="McDonald S."/>
            <person name="McLean J."/>
            <person name="Mooney P."/>
            <person name="Moule S."/>
            <person name="Mungall K.L."/>
            <person name="Murphy L.D."/>
            <person name="Niblett D."/>
            <person name="Odell C."/>
            <person name="Oliver K."/>
            <person name="O'Neil S."/>
            <person name="Pearson D."/>
            <person name="Quail M.A."/>
            <person name="Rabbinowitsch E."/>
            <person name="Rutherford K.M."/>
            <person name="Rutter S."/>
            <person name="Saunders D."/>
            <person name="Seeger K."/>
            <person name="Sharp S."/>
            <person name="Skelton J."/>
            <person name="Simmonds M.N."/>
            <person name="Squares R."/>
            <person name="Squares S."/>
            <person name="Stevens K."/>
            <person name="Taylor K."/>
            <person name="Taylor R.G."/>
            <person name="Tivey A."/>
            <person name="Walsh S.V."/>
            <person name="Warren T."/>
            <person name="Whitehead S."/>
            <person name="Woodward J.R."/>
            <person name="Volckaert G."/>
            <person name="Aert R."/>
            <person name="Robben J."/>
            <person name="Grymonprez B."/>
            <person name="Weltjens I."/>
            <person name="Vanstreels E."/>
            <person name="Rieger M."/>
            <person name="Schaefer M."/>
            <person name="Mueller-Auer S."/>
            <person name="Gabel C."/>
            <person name="Fuchs M."/>
            <person name="Duesterhoeft A."/>
            <person name="Fritzc C."/>
            <person name="Holzer E."/>
            <person name="Moestl D."/>
            <person name="Hilbert H."/>
            <person name="Borzym K."/>
            <person name="Langer I."/>
            <person name="Beck A."/>
            <person name="Lehrach H."/>
            <person name="Reinhardt R."/>
            <person name="Pohl T.M."/>
            <person name="Eger P."/>
            <person name="Zimmermann W."/>
            <person name="Wedler H."/>
            <person name="Wambutt R."/>
            <person name="Purnelle B."/>
            <person name="Goffeau A."/>
            <person name="Cadieu E."/>
            <person name="Dreano S."/>
            <person name="Gloux S."/>
            <person name="Lelaure V."/>
            <person name="Mottier S."/>
            <person name="Galibert F."/>
            <person name="Aves S.J."/>
            <person name="Xiang Z."/>
            <person name="Hunt C."/>
            <person name="Moore K."/>
            <person name="Hurst S.M."/>
            <person name="Lucas M."/>
            <person name="Rochet M."/>
            <person name="Gaillardin C."/>
            <person name="Tallada V.A."/>
            <person name="Garzon A."/>
            <person name="Thode G."/>
            <person name="Daga R.R."/>
            <person name="Cruzado L."/>
            <person name="Jimenez J."/>
            <person name="Sanchez M."/>
            <person name="del Rey F."/>
            <person name="Benito J."/>
            <person name="Dominguez A."/>
            <person name="Revuelta J.L."/>
            <person name="Moreno S."/>
            <person name="Armstrong J."/>
            <person name="Forsburg S.L."/>
            <person name="Cerutti L."/>
            <person name="Lowe T."/>
            <person name="McCombie W.R."/>
            <person name="Paulsen I."/>
            <person name="Potashkin J."/>
            <person name="Shpakovski G.V."/>
            <person name="Ussery D."/>
            <person name="Barrell B.G."/>
            <person name="Nurse P."/>
        </authorList>
    </citation>
    <scope>NUCLEOTIDE SEQUENCE [LARGE SCALE GENOMIC DNA]</scope>
    <source>
        <strain>972 / ATCC 24843</strain>
    </source>
</reference>
<reference key="2">
    <citation type="journal article" date="2004" name="Yeast">
        <title>Chr4, a Schizosaccharomyces pombe homologue of the Saccharomyces cerevisiae Chs4p/Skt5p protein, is related to septum formation and is required for the proper localization of Chs2.</title>
        <authorList>
            <person name="Matsuo Y."/>
            <person name="Matsuura Y."/>
            <person name="Tanaka K."/>
            <person name="Matsuda H."/>
            <person name="Kawamukai M."/>
        </authorList>
    </citation>
    <scope>FUNCTION</scope>
    <scope>SUBCELLULAR LOCATION</scope>
</reference>
<reference key="3">
    <citation type="journal article" date="2008" name="J. Proteome Res.">
        <title>Phosphoproteome analysis of fission yeast.</title>
        <authorList>
            <person name="Wilson-Grady J.T."/>
            <person name="Villen J."/>
            <person name="Gygi S.P."/>
        </authorList>
    </citation>
    <scope>PHOSPHORYLATION [LARGE SCALE ANALYSIS] AT SER-148</scope>
    <scope>IDENTIFICATION BY MASS SPECTROMETRY</scope>
</reference>
<comment type="function">
    <text evidence="2">Involved in septum formation. Required for the proper localization of chs2 at the septum.</text>
</comment>
<comment type="subcellular location">
    <subcellularLocation>
        <location evidence="2">Cytoplasm</location>
    </subcellularLocation>
    <text>Localizes to the cell tips and septum during vegetative growth.</text>
</comment>
<feature type="chain" id="PRO_0000076207" description="Chitin synthase regulatory factor 4">
    <location>
        <begin position="1"/>
        <end position="633"/>
    </location>
</feature>
<feature type="repeat" description="Sel1-like 1">
    <location>
        <begin position="278"/>
        <end position="314"/>
    </location>
</feature>
<feature type="repeat" description="Sel1-like 2">
    <location>
        <begin position="315"/>
        <end position="346"/>
    </location>
</feature>
<feature type="repeat" description="Sel1-like 3">
    <location>
        <begin position="438"/>
        <end position="474"/>
    </location>
</feature>
<feature type="repeat" description="Sel1-like 4">
    <location>
        <begin position="475"/>
        <end position="511"/>
    </location>
</feature>
<feature type="repeat" description="Sel1-like 5">
    <location>
        <begin position="512"/>
        <end position="543"/>
    </location>
</feature>
<feature type="region of interest" description="Disordered" evidence="1">
    <location>
        <begin position="121"/>
        <end position="151"/>
    </location>
</feature>
<feature type="region of interest" description="Disordered" evidence="1">
    <location>
        <begin position="583"/>
        <end position="613"/>
    </location>
</feature>
<feature type="compositionally biased region" description="Polar residues" evidence="1">
    <location>
        <begin position="136"/>
        <end position="149"/>
    </location>
</feature>
<feature type="compositionally biased region" description="Low complexity" evidence="1">
    <location>
        <begin position="592"/>
        <end position="613"/>
    </location>
</feature>
<feature type="modified residue" description="Phosphoserine" evidence="3">
    <location>
        <position position="148"/>
    </location>
</feature>
<evidence type="ECO:0000256" key="1">
    <source>
        <dbReference type="SAM" id="MobiDB-lite"/>
    </source>
</evidence>
<evidence type="ECO:0000269" key="2">
    <source>
    </source>
</evidence>
<evidence type="ECO:0000269" key="3">
    <source>
    </source>
</evidence>